<proteinExistence type="evidence at protein level"/>
<dbReference type="EC" id="2.4.2.24" evidence="7"/>
<dbReference type="EMBL" id="Z99707">
    <property type="protein sequence ID" value="CAB16800.1"/>
    <property type="status" value="ALT_SEQ"/>
    <property type="molecule type" value="Genomic_DNA"/>
</dbReference>
<dbReference type="EMBL" id="AL161590">
    <property type="protein sequence ID" value="CAB80355.1"/>
    <property type="status" value="ALT_SEQ"/>
    <property type="molecule type" value="Genomic_DNA"/>
</dbReference>
<dbReference type="EMBL" id="CP002687">
    <property type="protein sequence ID" value="AEE86714.1"/>
    <property type="molecule type" value="Genomic_DNA"/>
</dbReference>
<dbReference type="EMBL" id="AY140036">
    <property type="protein sequence ID" value="AAM98177.1"/>
    <property type="molecule type" value="mRNA"/>
</dbReference>
<dbReference type="EMBL" id="BT014969">
    <property type="protein sequence ID" value="AAT47820.1"/>
    <property type="molecule type" value="mRNA"/>
</dbReference>
<dbReference type="PIR" id="F85435">
    <property type="entry name" value="F85435"/>
</dbReference>
<dbReference type="RefSeq" id="NP_195407.2">
    <property type="nucleotide sequence ID" value="NM_119853.4"/>
</dbReference>
<dbReference type="SMR" id="Q8L707"/>
<dbReference type="FunCoup" id="Q8L707">
    <property type="interactions" value="1410"/>
</dbReference>
<dbReference type="STRING" id="3702.Q8L707"/>
<dbReference type="CAZy" id="GT43">
    <property type="family name" value="Glycosyltransferase Family 43"/>
</dbReference>
<dbReference type="GlyCosmos" id="Q8L707">
    <property type="glycosylation" value="3 sites, No reported glycans"/>
</dbReference>
<dbReference type="GlyGen" id="Q8L707">
    <property type="glycosylation" value="4 sites"/>
</dbReference>
<dbReference type="iPTMnet" id="Q8L707"/>
<dbReference type="PaxDb" id="3702-AT4G36890.1"/>
<dbReference type="ProteomicsDB" id="247051"/>
<dbReference type="EnsemblPlants" id="AT4G36890.1">
    <property type="protein sequence ID" value="AT4G36890.1"/>
    <property type="gene ID" value="AT4G36890"/>
</dbReference>
<dbReference type="GeneID" id="829842"/>
<dbReference type="Gramene" id="AT4G36890.1">
    <property type="protein sequence ID" value="AT4G36890.1"/>
    <property type="gene ID" value="AT4G36890"/>
</dbReference>
<dbReference type="KEGG" id="ath:AT4G36890"/>
<dbReference type="Araport" id="AT4G36890"/>
<dbReference type="TAIR" id="AT4G36890">
    <property type="gene designation" value="IRX14"/>
</dbReference>
<dbReference type="eggNOG" id="KOG1476">
    <property type="taxonomic scope" value="Eukaryota"/>
</dbReference>
<dbReference type="HOGENOM" id="CLU_042214_1_0_1"/>
<dbReference type="InParanoid" id="Q8L707"/>
<dbReference type="OMA" id="LIGWHIF"/>
<dbReference type="PhylomeDB" id="Q8L707"/>
<dbReference type="BioCyc" id="ARA:AT4G36890-MONOMER"/>
<dbReference type="BRENDA" id="2.4.2.24">
    <property type="organism ID" value="399"/>
</dbReference>
<dbReference type="PRO" id="PR:Q8L707"/>
<dbReference type="Proteomes" id="UP000006548">
    <property type="component" value="Chromosome 4"/>
</dbReference>
<dbReference type="ExpressionAtlas" id="Q8L707">
    <property type="expression patterns" value="baseline and differential"/>
</dbReference>
<dbReference type="GO" id="GO:0005768">
    <property type="term" value="C:endosome"/>
    <property type="evidence" value="ECO:0007005"/>
    <property type="project" value="TAIR"/>
</dbReference>
<dbReference type="GO" id="GO:0005794">
    <property type="term" value="C:Golgi apparatus"/>
    <property type="evidence" value="ECO:0000314"/>
    <property type="project" value="TAIR"/>
</dbReference>
<dbReference type="GO" id="GO:0000139">
    <property type="term" value="C:Golgi membrane"/>
    <property type="evidence" value="ECO:0007669"/>
    <property type="project" value="UniProtKB-SubCell"/>
</dbReference>
<dbReference type="GO" id="GO:0000138">
    <property type="term" value="C:Golgi trans cisterna"/>
    <property type="evidence" value="ECO:0000314"/>
    <property type="project" value="TAIR"/>
</dbReference>
<dbReference type="GO" id="GO:0005802">
    <property type="term" value="C:trans-Golgi network"/>
    <property type="evidence" value="ECO:0007005"/>
    <property type="project" value="TAIR"/>
</dbReference>
<dbReference type="GO" id="GO:0047517">
    <property type="term" value="F:1,4-beta-D-xylan synthase activity"/>
    <property type="evidence" value="ECO:0000315"/>
    <property type="project" value="TAIR"/>
</dbReference>
<dbReference type="GO" id="GO:0015018">
    <property type="term" value="F:galactosylgalactosylxylosylprotein 3-beta-glucuronosyltransferase activity"/>
    <property type="evidence" value="ECO:0007669"/>
    <property type="project" value="InterPro"/>
</dbReference>
<dbReference type="GO" id="GO:0042285">
    <property type="term" value="F:xylosyltransferase activity"/>
    <property type="evidence" value="ECO:0000315"/>
    <property type="project" value="TAIR"/>
</dbReference>
<dbReference type="GO" id="GO:0010154">
    <property type="term" value="P:fruit development"/>
    <property type="evidence" value="ECO:0000315"/>
    <property type="project" value="TAIR"/>
</dbReference>
<dbReference type="GO" id="GO:0010417">
    <property type="term" value="P:glucuronoxylan biosynthetic process"/>
    <property type="evidence" value="ECO:0000315"/>
    <property type="project" value="TAIR"/>
</dbReference>
<dbReference type="GO" id="GO:0048354">
    <property type="term" value="P:mucilage biosynthetic process involved in seed coat development"/>
    <property type="evidence" value="ECO:0000315"/>
    <property type="project" value="TAIR"/>
</dbReference>
<dbReference type="GO" id="GO:0080001">
    <property type="term" value="P:mucilage extrusion from seed coat"/>
    <property type="evidence" value="ECO:0000315"/>
    <property type="project" value="UniProtKB"/>
</dbReference>
<dbReference type="GO" id="GO:0048358">
    <property type="term" value="P:mucilage pectin biosynthetic process"/>
    <property type="evidence" value="ECO:0000315"/>
    <property type="project" value="UniProtKB"/>
</dbReference>
<dbReference type="GO" id="GO:0010246">
    <property type="term" value="P:rhamnogalacturonan I biosynthetic process"/>
    <property type="evidence" value="ECO:0000316"/>
    <property type="project" value="TAIR"/>
</dbReference>
<dbReference type="GO" id="GO:0048367">
    <property type="term" value="P:shoot system development"/>
    <property type="evidence" value="ECO:0000315"/>
    <property type="project" value="TAIR"/>
</dbReference>
<dbReference type="GO" id="GO:0045492">
    <property type="term" value="P:xylan biosynthetic process"/>
    <property type="evidence" value="ECO:0000315"/>
    <property type="project" value="TAIR"/>
</dbReference>
<dbReference type="GO" id="GO:0045491">
    <property type="term" value="P:xylan metabolic process"/>
    <property type="evidence" value="ECO:0000315"/>
    <property type="project" value="UniProtKB"/>
</dbReference>
<dbReference type="GO" id="GO:0010051">
    <property type="term" value="P:xylem and phloem pattern formation"/>
    <property type="evidence" value="ECO:0000315"/>
    <property type="project" value="TAIR"/>
</dbReference>
<dbReference type="FunFam" id="3.90.550.10:FF:000096">
    <property type="entry name" value="Glycosyltransferases"/>
    <property type="match status" value="1"/>
</dbReference>
<dbReference type="Gene3D" id="3.90.550.10">
    <property type="entry name" value="Spore Coat Polysaccharide Biosynthesis Protein SpsA, Chain A"/>
    <property type="match status" value="1"/>
</dbReference>
<dbReference type="InterPro" id="IPR005027">
    <property type="entry name" value="Glyco_trans_43"/>
</dbReference>
<dbReference type="InterPro" id="IPR029044">
    <property type="entry name" value="Nucleotide-diphossugar_trans"/>
</dbReference>
<dbReference type="PANTHER" id="PTHR10896:SF63">
    <property type="entry name" value="BETA-1,4-XYLOSYLTRANSFERASE IRX14"/>
    <property type="match status" value="1"/>
</dbReference>
<dbReference type="PANTHER" id="PTHR10896">
    <property type="entry name" value="GALACTOSYLGALACTOSYLXYLOSYLPROTEIN 3-BETA-GLUCURONOSYLTRANSFERASE BETA-1,3-GLUCURONYLTRANSFERASE"/>
    <property type="match status" value="1"/>
</dbReference>
<dbReference type="Pfam" id="PF03360">
    <property type="entry name" value="Glyco_transf_43"/>
    <property type="match status" value="1"/>
</dbReference>
<dbReference type="SUPFAM" id="SSF53448">
    <property type="entry name" value="Nucleotide-diphospho-sugar transferases"/>
    <property type="match status" value="1"/>
</dbReference>
<name>IRX14_ARATH</name>
<evidence type="ECO:0000255" key="1"/>
<evidence type="ECO:0000256" key="2">
    <source>
        <dbReference type="SAM" id="MobiDB-lite"/>
    </source>
</evidence>
<evidence type="ECO:0000269" key="3">
    <source>
    </source>
</evidence>
<evidence type="ECO:0000269" key="4">
    <source>
    </source>
</evidence>
<evidence type="ECO:0000269" key="5">
    <source>
    </source>
</evidence>
<evidence type="ECO:0000269" key="6">
    <source>
    </source>
</evidence>
<evidence type="ECO:0000269" key="7">
    <source>
    </source>
</evidence>
<evidence type="ECO:0000269" key="8">
    <source>
    </source>
</evidence>
<evidence type="ECO:0000269" key="9">
    <source>
    </source>
</evidence>
<evidence type="ECO:0000269" key="10">
    <source>
    </source>
</evidence>
<evidence type="ECO:0000269" key="11">
    <source>
    </source>
</evidence>
<evidence type="ECO:0000303" key="12">
    <source>
    </source>
</evidence>
<evidence type="ECO:0000305" key="13"/>
<evidence type="ECO:0000305" key="14">
    <source>
    </source>
</evidence>
<evidence type="ECO:0000312" key="15">
    <source>
        <dbReference type="Araport" id="AT4G36890"/>
    </source>
</evidence>
<evidence type="ECO:0000312" key="16">
    <source>
        <dbReference type="EMBL" id="CAB16800.1"/>
    </source>
</evidence>
<reference key="1">
    <citation type="journal article" date="1998" name="Nature">
        <title>Analysis of 1.9 Mb of contiguous sequence from chromosome 4 of Arabidopsis thaliana.</title>
        <authorList>
            <person name="Bevan M."/>
            <person name="Bancroft I."/>
            <person name="Bent E."/>
            <person name="Love K."/>
            <person name="Goodman H.M."/>
            <person name="Dean C."/>
            <person name="Bergkamp R."/>
            <person name="Dirkse W."/>
            <person name="van Staveren M."/>
            <person name="Stiekema W."/>
            <person name="Drost L."/>
            <person name="Ridley P."/>
            <person name="Hudson S.-A."/>
            <person name="Patel K."/>
            <person name="Murphy G."/>
            <person name="Piffanelli P."/>
            <person name="Wedler H."/>
            <person name="Wedler E."/>
            <person name="Wambutt R."/>
            <person name="Weitzenegger T."/>
            <person name="Pohl T."/>
            <person name="Terryn N."/>
            <person name="Gielen J."/>
            <person name="Villarroel R."/>
            <person name="De Clercq R."/>
            <person name="van Montagu M."/>
            <person name="Lecharny A."/>
            <person name="Aubourg S."/>
            <person name="Gy I."/>
            <person name="Kreis M."/>
            <person name="Lao N."/>
            <person name="Kavanagh T."/>
            <person name="Hempel S."/>
            <person name="Kotter P."/>
            <person name="Entian K.-D."/>
            <person name="Rieger M."/>
            <person name="Schaefer M."/>
            <person name="Funk B."/>
            <person name="Mueller-Auer S."/>
            <person name="Silvey M."/>
            <person name="James R."/>
            <person name="Monfort A."/>
            <person name="Pons A."/>
            <person name="Puigdomenech P."/>
            <person name="Douka A."/>
            <person name="Voukelatou E."/>
            <person name="Milioni D."/>
            <person name="Hatzopoulos P."/>
            <person name="Piravandi E."/>
            <person name="Obermaier B."/>
            <person name="Hilbert H."/>
            <person name="Duesterhoeft A."/>
            <person name="Moores T."/>
            <person name="Jones J.D.G."/>
            <person name="Eneva T."/>
            <person name="Palme K."/>
            <person name="Benes V."/>
            <person name="Rechmann S."/>
            <person name="Ansorge W."/>
            <person name="Cooke R."/>
            <person name="Berger C."/>
            <person name="Delseny M."/>
            <person name="Voet M."/>
            <person name="Volckaert G."/>
            <person name="Mewes H.-W."/>
            <person name="Klosterman S."/>
            <person name="Schueller C."/>
            <person name="Chalwatzis N."/>
        </authorList>
    </citation>
    <scope>NUCLEOTIDE SEQUENCE [LARGE SCALE GENOMIC DNA]</scope>
    <source>
        <strain>cv. Columbia</strain>
    </source>
</reference>
<reference key="2">
    <citation type="journal article" date="1999" name="Nature">
        <title>Sequence and analysis of chromosome 4 of the plant Arabidopsis thaliana.</title>
        <authorList>
            <person name="Mayer K.F.X."/>
            <person name="Schueller C."/>
            <person name="Wambutt R."/>
            <person name="Murphy G."/>
            <person name="Volckaert G."/>
            <person name="Pohl T."/>
            <person name="Duesterhoeft A."/>
            <person name="Stiekema W."/>
            <person name="Entian K.-D."/>
            <person name="Terryn N."/>
            <person name="Harris B."/>
            <person name="Ansorge W."/>
            <person name="Brandt P."/>
            <person name="Grivell L.A."/>
            <person name="Rieger M."/>
            <person name="Weichselgartner M."/>
            <person name="de Simone V."/>
            <person name="Obermaier B."/>
            <person name="Mache R."/>
            <person name="Mueller M."/>
            <person name="Kreis M."/>
            <person name="Delseny M."/>
            <person name="Puigdomenech P."/>
            <person name="Watson M."/>
            <person name="Schmidtheini T."/>
            <person name="Reichert B."/>
            <person name="Portetelle D."/>
            <person name="Perez-Alonso M."/>
            <person name="Boutry M."/>
            <person name="Bancroft I."/>
            <person name="Vos P."/>
            <person name="Hoheisel J."/>
            <person name="Zimmermann W."/>
            <person name="Wedler H."/>
            <person name="Ridley P."/>
            <person name="Langham S.-A."/>
            <person name="McCullagh B."/>
            <person name="Bilham L."/>
            <person name="Robben J."/>
            <person name="van der Schueren J."/>
            <person name="Grymonprez B."/>
            <person name="Chuang Y.-J."/>
            <person name="Vandenbussche F."/>
            <person name="Braeken M."/>
            <person name="Weltjens I."/>
            <person name="Voet M."/>
            <person name="Bastiaens I."/>
            <person name="Aert R."/>
            <person name="Defoor E."/>
            <person name="Weitzenegger T."/>
            <person name="Bothe G."/>
            <person name="Ramsperger U."/>
            <person name="Hilbert H."/>
            <person name="Braun M."/>
            <person name="Holzer E."/>
            <person name="Brandt A."/>
            <person name="Peters S."/>
            <person name="van Staveren M."/>
            <person name="Dirkse W."/>
            <person name="Mooijman P."/>
            <person name="Klein Lankhorst R."/>
            <person name="Rose M."/>
            <person name="Hauf J."/>
            <person name="Koetter P."/>
            <person name="Berneiser S."/>
            <person name="Hempel S."/>
            <person name="Feldpausch M."/>
            <person name="Lamberth S."/>
            <person name="Van den Daele H."/>
            <person name="De Keyser A."/>
            <person name="Buysshaert C."/>
            <person name="Gielen J."/>
            <person name="Villarroel R."/>
            <person name="De Clercq R."/>
            <person name="van Montagu M."/>
            <person name="Rogers J."/>
            <person name="Cronin A."/>
            <person name="Quail M.A."/>
            <person name="Bray-Allen S."/>
            <person name="Clark L."/>
            <person name="Doggett J."/>
            <person name="Hall S."/>
            <person name="Kay M."/>
            <person name="Lennard N."/>
            <person name="McLay K."/>
            <person name="Mayes R."/>
            <person name="Pettett A."/>
            <person name="Rajandream M.A."/>
            <person name="Lyne M."/>
            <person name="Benes V."/>
            <person name="Rechmann S."/>
            <person name="Borkova D."/>
            <person name="Bloecker H."/>
            <person name="Scharfe M."/>
            <person name="Grimm M."/>
            <person name="Loehnert T.-H."/>
            <person name="Dose S."/>
            <person name="de Haan M."/>
            <person name="Maarse A.C."/>
            <person name="Schaefer M."/>
            <person name="Mueller-Auer S."/>
            <person name="Gabel C."/>
            <person name="Fuchs M."/>
            <person name="Fartmann B."/>
            <person name="Granderath K."/>
            <person name="Dauner D."/>
            <person name="Herzl A."/>
            <person name="Neumann S."/>
            <person name="Argiriou A."/>
            <person name="Vitale D."/>
            <person name="Liguori R."/>
            <person name="Piravandi E."/>
            <person name="Massenet O."/>
            <person name="Quigley F."/>
            <person name="Clabauld G."/>
            <person name="Muendlein A."/>
            <person name="Felber R."/>
            <person name="Schnabl S."/>
            <person name="Hiller R."/>
            <person name="Schmidt W."/>
            <person name="Lecharny A."/>
            <person name="Aubourg S."/>
            <person name="Chefdor F."/>
            <person name="Cooke R."/>
            <person name="Berger C."/>
            <person name="Monfort A."/>
            <person name="Casacuberta E."/>
            <person name="Gibbons T."/>
            <person name="Weber N."/>
            <person name="Vandenbol M."/>
            <person name="Bargues M."/>
            <person name="Terol J."/>
            <person name="Torres A."/>
            <person name="Perez-Perez A."/>
            <person name="Purnelle B."/>
            <person name="Bent E."/>
            <person name="Johnson S."/>
            <person name="Tacon D."/>
            <person name="Jesse T."/>
            <person name="Heijnen L."/>
            <person name="Schwarz S."/>
            <person name="Scholler P."/>
            <person name="Heber S."/>
            <person name="Francs P."/>
            <person name="Bielke C."/>
            <person name="Frishman D."/>
            <person name="Haase D."/>
            <person name="Lemcke K."/>
            <person name="Mewes H.-W."/>
            <person name="Stocker S."/>
            <person name="Zaccaria P."/>
            <person name="Bevan M."/>
            <person name="Wilson R.K."/>
            <person name="de la Bastide M."/>
            <person name="Habermann K."/>
            <person name="Parnell L."/>
            <person name="Dedhia N."/>
            <person name="Gnoj L."/>
            <person name="Schutz K."/>
            <person name="Huang E."/>
            <person name="Spiegel L."/>
            <person name="Sekhon M."/>
            <person name="Murray J."/>
            <person name="Sheet P."/>
            <person name="Cordes M."/>
            <person name="Abu-Threideh J."/>
            <person name="Stoneking T."/>
            <person name="Kalicki J."/>
            <person name="Graves T."/>
            <person name="Harmon G."/>
            <person name="Edwards J."/>
            <person name="Latreille P."/>
            <person name="Courtney L."/>
            <person name="Cloud J."/>
            <person name="Abbott A."/>
            <person name="Scott K."/>
            <person name="Johnson D."/>
            <person name="Minx P."/>
            <person name="Bentley D."/>
            <person name="Fulton B."/>
            <person name="Miller N."/>
            <person name="Greco T."/>
            <person name="Kemp K."/>
            <person name="Kramer J."/>
            <person name="Fulton L."/>
            <person name="Mardis E."/>
            <person name="Dante M."/>
            <person name="Pepin K."/>
            <person name="Hillier L.W."/>
            <person name="Nelson J."/>
            <person name="Spieth J."/>
            <person name="Ryan E."/>
            <person name="Andrews S."/>
            <person name="Geisel C."/>
            <person name="Layman D."/>
            <person name="Du H."/>
            <person name="Ali J."/>
            <person name="Berghoff A."/>
            <person name="Jones K."/>
            <person name="Drone K."/>
            <person name="Cotton M."/>
            <person name="Joshu C."/>
            <person name="Antonoiu B."/>
            <person name="Zidanic M."/>
            <person name="Strong C."/>
            <person name="Sun H."/>
            <person name="Lamar B."/>
            <person name="Yordan C."/>
            <person name="Ma P."/>
            <person name="Zhong J."/>
            <person name="Preston R."/>
            <person name="Vil D."/>
            <person name="Shekher M."/>
            <person name="Matero A."/>
            <person name="Shah R."/>
            <person name="Swaby I.K."/>
            <person name="O'Shaughnessy A."/>
            <person name="Rodriguez M."/>
            <person name="Hoffman J."/>
            <person name="Till S."/>
            <person name="Granat S."/>
            <person name="Shohdy N."/>
            <person name="Hasegawa A."/>
            <person name="Hameed A."/>
            <person name="Lodhi M."/>
            <person name="Johnson A."/>
            <person name="Chen E."/>
            <person name="Marra M.A."/>
            <person name="Martienssen R."/>
            <person name="McCombie W.R."/>
        </authorList>
    </citation>
    <scope>NUCLEOTIDE SEQUENCE [LARGE SCALE GENOMIC DNA]</scope>
    <source>
        <strain>cv. Columbia</strain>
    </source>
</reference>
<reference key="3">
    <citation type="journal article" date="2017" name="Plant J.">
        <title>Araport11: a complete reannotation of the Arabidopsis thaliana reference genome.</title>
        <authorList>
            <person name="Cheng C.Y."/>
            <person name="Krishnakumar V."/>
            <person name="Chan A.P."/>
            <person name="Thibaud-Nissen F."/>
            <person name="Schobel S."/>
            <person name="Town C.D."/>
        </authorList>
    </citation>
    <scope>GENOME REANNOTATION</scope>
    <source>
        <strain>cv. Columbia</strain>
    </source>
</reference>
<reference key="4">
    <citation type="journal article" date="2003" name="Science">
        <title>Empirical analysis of transcriptional activity in the Arabidopsis genome.</title>
        <authorList>
            <person name="Yamada K."/>
            <person name="Lim J."/>
            <person name="Dale J.M."/>
            <person name="Chen H."/>
            <person name="Shinn P."/>
            <person name="Palm C.J."/>
            <person name="Southwick A.M."/>
            <person name="Wu H.C."/>
            <person name="Kim C.J."/>
            <person name="Nguyen M."/>
            <person name="Pham P.K."/>
            <person name="Cheuk R.F."/>
            <person name="Karlin-Newmann G."/>
            <person name="Liu S.X."/>
            <person name="Lam B."/>
            <person name="Sakano H."/>
            <person name="Wu T."/>
            <person name="Yu G."/>
            <person name="Miranda M."/>
            <person name="Quach H.L."/>
            <person name="Tripp M."/>
            <person name="Chang C.H."/>
            <person name="Lee J.M."/>
            <person name="Toriumi M.J."/>
            <person name="Chan M.M."/>
            <person name="Tang C.C."/>
            <person name="Onodera C.S."/>
            <person name="Deng J.M."/>
            <person name="Akiyama K."/>
            <person name="Ansari Y."/>
            <person name="Arakawa T."/>
            <person name="Banh J."/>
            <person name="Banno F."/>
            <person name="Bowser L."/>
            <person name="Brooks S.Y."/>
            <person name="Carninci P."/>
            <person name="Chao Q."/>
            <person name="Choy N."/>
            <person name="Enju A."/>
            <person name="Goldsmith A.D."/>
            <person name="Gurjal M."/>
            <person name="Hansen N.F."/>
            <person name="Hayashizaki Y."/>
            <person name="Johnson-Hopson C."/>
            <person name="Hsuan V.W."/>
            <person name="Iida K."/>
            <person name="Karnes M."/>
            <person name="Khan S."/>
            <person name="Koesema E."/>
            <person name="Ishida J."/>
            <person name="Jiang P.X."/>
            <person name="Jones T."/>
            <person name="Kawai J."/>
            <person name="Kamiya A."/>
            <person name="Meyers C."/>
            <person name="Nakajima M."/>
            <person name="Narusaka M."/>
            <person name="Seki M."/>
            <person name="Sakurai T."/>
            <person name="Satou M."/>
            <person name="Tamse R."/>
            <person name="Vaysberg M."/>
            <person name="Wallender E.K."/>
            <person name="Wong C."/>
            <person name="Yamamura Y."/>
            <person name="Yuan S."/>
            <person name="Shinozaki K."/>
            <person name="Davis R.W."/>
            <person name="Theologis A."/>
            <person name="Ecker J.R."/>
        </authorList>
    </citation>
    <scope>NUCLEOTIDE SEQUENCE [LARGE SCALE MRNA]</scope>
    <source>
        <strain>cv. Columbia</strain>
    </source>
</reference>
<reference key="5">
    <citation type="submission" date="2004-06" db="EMBL/GenBank/DDBJ databases">
        <title>Arabidopsis ORF clones.</title>
        <authorList>
            <person name="Cheuk R.F."/>
            <person name="Chen H."/>
            <person name="Kim C.J."/>
            <person name="Shinn P."/>
            <person name="Ecker J.R."/>
        </authorList>
    </citation>
    <scope>NUCLEOTIDE SEQUENCE [LARGE SCALE MRNA]</scope>
    <source>
        <strain>cv. Columbia</strain>
    </source>
</reference>
<reference key="6">
    <citation type="journal article" date="2007" name="Plant J.">
        <title>Comparison of five xylan synthesis mutants reveals new insight into the mechanisms of xylan synthesis.</title>
        <authorList>
            <person name="Brown D.M."/>
            <person name="Goubet F."/>
            <person name="Wong V.W."/>
            <person name="Goodacre R."/>
            <person name="Stephens E."/>
            <person name="Dupree P."/>
            <person name="Turner S.R."/>
        </authorList>
    </citation>
    <scope>FUNCTION</scope>
    <scope>DISRUPTION PHENOTYPE</scope>
</reference>
<reference key="7">
    <citation type="journal article" date="2010" name="Mol. Plant">
        <title>IRX14 and IRX14-LIKE, two glycosyl transferases involved in glucuronoxylan biosynthesis and drought tolerance in Arabidopsis.</title>
        <authorList>
            <person name="Keppler B.D."/>
            <person name="Showalter A.M."/>
        </authorList>
    </citation>
    <scope>FUNCTION</scope>
</reference>
<reference key="8">
    <citation type="journal article" date="2010" name="Plant Physiol.">
        <title>The Arabidopsis family GT43 glycosyltransferases form two functionally nonredundant groups essential for the elongation of glucuronoxylan backbone.</title>
        <authorList>
            <person name="Lee C."/>
            <person name="Teng Q."/>
            <person name="Huang W."/>
            <person name="Zhong R."/>
            <person name="Ye Z.H."/>
        </authorList>
    </citation>
    <scope>FUNCTION</scope>
    <scope>SUBCELLULAR LOCATION</scope>
    <scope>TISSUE SPECIFICITY</scope>
</reference>
<reference key="9">
    <citation type="journal article" date="2010" name="Plant Physiol.">
        <title>Analysis of the Arabidopsis IRX9/IRX9-L and IRX14/IRX14-L pairs of glycosyltransferase genes reveals critical contributions to biosynthesis of the hemicellulose glucuronoxylan.</title>
        <authorList>
            <person name="Wu A.M."/>
            <person name="Hoernblad E."/>
            <person name="Voxeur A."/>
            <person name="Gerber L."/>
            <person name="Rihouey C."/>
            <person name="Lerouge P."/>
            <person name="Marchant A."/>
        </authorList>
    </citation>
    <scope>FUNCTION</scope>
</reference>
<reference key="10">
    <citation type="journal article" date="2012" name="Plant Cell Physiol.">
        <title>Arabidopsis family GT43 members are xylan xylosyltransferases required for the elongation of the xylan backbone.</title>
        <authorList>
            <person name="Lee C."/>
            <person name="Zhong R."/>
            <person name="Ye Z.H."/>
        </authorList>
    </citation>
    <scope>FUNCTION</scope>
    <scope>CATALYTIC ACTIVITY</scope>
</reference>
<reference key="11">
    <citation type="journal article" date="2014" name="PLoS ONE">
        <title>Site-directed mutagenesis of IRX9, IRX9L and IRX14 proteins involved in xylan biosynthesis: glycosyltransferase activity is not required for IRX9 function in Arabidopsis.</title>
        <authorList>
            <person name="Ren Y."/>
            <person name="Hansen S.F."/>
            <person name="Ebert B."/>
            <person name="Lau J."/>
            <person name="Scheller H.V."/>
        </authorList>
    </citation>
    <scope>FUNCTION</scope>
    <scope>MUTAGENESIS OF 261-ASP-ASP-262; GLN-321 AND CYS-415</scope>
</reference>
<reference key="12">
    <citation type="journal article" date="2015" name="Plant Physiol.">
        <title>Highly branched xylan made by IRREGULAR XYLEM14 and MUCILAGE-RELATED21 links mucilage to Arabidopsis seeds.</title>
        <authorList>
            <person name="Voiniciuc C."/>
            <person name="Guenl M."/>
            <person name="Schmidt M.H."/>
            <person name="Usadel B."/>
        </authorList>
    </citation>
    <scope>FUNCTION</scope>
    <scope>DEVELOPMENTAL STAGE</scope>
    <scope>DISRUPTION PHENOTYPE</scope>
</reference>
<reference key="13">
    <citation type="journal article" date="2016" name="J. Exp. Bot.">
        <title>Xylan synthesized by Irregular Xylem 14 (IRX14) maintains the structure of seed coat mucilage in Arabidopsis.</title>
        <authorList>
            <person name="Hu R."/>
            <person name="Li J."/>
            <person name="Wang X."/>
            <person name="Zhao X."/>
            <person name="Yang X."/>
            <person name="Tang Q."/>
            <person name="He G."/>
            <person name="Zhou G."/>
            <person name="Kong Y."/>
        </authorList>
    </citation>
    <scope>FUNCTION</scope>
    <scope>DISRUPTION PHENOTYPE</scope>
</reference>
<reference key="14">
    <citation type="journal article" date="2018" name="Plant Physiol.">
        <title>Identification of key enzymes for pectin synthesis in seed mucilage.</title>
        <authorList>
            <person name="Voiniciuc C."/>
            <person name="Engle K.A."/>
            <person name="Guenl M."/>
            <person name="Dieluweit S."/>
            <person name="Schmidt M.H."/>
            <person name="Yang J.Y."/>
            <person name="Moremen K.W."/>
            <person name="Mohnen D."/>
            <person name="Usadel B."/>
        </authorList>
    </citation>
    <scope>FUNCTION</scope>
    <scope>DISRUPTION PHENOTYPE</scope>
</reference>
<protein>
    <recommendedName>
        <fullName evidence="13">Beta-1,4-xylosyltransferase IRX14</fullName>
        <ecNumber evidence="7">2.4.2.24</ecNumber>
    </recommendedName>
    <alternativeName>
        <fullName evidence="12">Protein IRREGULAR XYLEM 14</fullName>
    </alternativeName>
    <alternativeName>
        <fullName evidence="13">Xylan xylosyltransferase IRX14</fullName>
    </alternativeName>
</protein>
<gene>
    <name evidence="12" type="primary">IRX14</name>
    <name evidence="15" type="ordered locus">At4g36890</name>
    <name evidence="16" type="ORF">AP22.51</name>
    <name evidence="16" type="ORF">C7A10.470</name>
</gene>
<accession>Q8L707</accession>
<accession>O23194</accession>
<keyword id="KW-0961">Cell wall biogenesis/degradation</keyword>
<keyword id="KW-0325">Glycoprotein</keyword>
<keyword id="KW-0328">Glycosyltransferase</keyword>
<keyword id="KW-0333">Golgi apparatus</keyword>
<keyword id="KW-0472">Membrane</keyword>
<keyword id="KW-1185">Reference proteome</keyword>
<keyword id="KW-0735">Signal-anchor</keyword>
<keyword id="KW-0808">Transferase</keyword>
<keyword id="KW-0812">Transmembrane</keyword>
<keyword id="KW-1133">Transmembrane helix</keyword>
<sequence length="525" mass="59099">MKLSALHQSYLNRRSNSFRSPTSLDSSVDGSGKSLIAVFWLILHCLCCLISLVLGFRFSRLVFFFLFSTSSTNLYSLPFRPDLPVKHLDVHTIGRTLDPGANGTTVVATATKSSRVVVGRHGIRIRPWPHPNPVEVMKAHQIIGRVQKEQKMIFGMKSSKMVIAVTPTYVRTFQALHLTGVMHSLMLVPYDLVWIVVEAGGATNETGLIIAKSGLRTIHVGIDQRMPNTWEDRSKLEVFMRLQALRVVREEKLDGIVMFADDSNMHSMELFDEIQNVKWFGTVSVGILAHSGNAEEMVLSMEKRKEMEKEEEEESSSLPVQGPACNSTDQLIGWHIFNTLPYAGKSAVYIDDVAAVLPQKLEWSGFVLNSRLLWEEAENKPEWVKDFGSLNENEGVESPLSLLKDPSMVEPLGSCGRQVLLWWLRVEARADSKFPPGWIIDPPLEITVAAKRTPWPDVPPEPPTKKKDQMPLSQGNTVVVIPKQQQHPTKIRKPKRKSKKSKHEPRPTDTTTQVYSSSSKHQERN</sequence>
<comment type="function">
    <text evidence="3 4 5 6 7 8 9 10 11">Involved in the synthesis of the hemicellulose glucuronoxylan, a major component of secondary cell walls (PubMed:17944810, PubMed:20335400, PubMed:20424005, PubMed:20595206). Involved in the elongation of glucuronoxylan xylosyl backbone (PubMed:17944810, PubMed:20335400, PubMed:20424005, PubMed:20595206). Xylan xylosyltransferase that acts cooperatively with IRX9 to achieve the successive addition of xylosyl residues during xylan backbone elongation (PubMed:22080591, PubMed:25118690). Required for the proper composition and structural properties of released seed coat mucilage (PubMed:26482889, PubMed:26834178). Required for the production of highly branched xylan polymers in seed coat mucilage (PubMed:26482889, PubMed:26834178). Xylan with xylose side chains seems to be necessary for pectin attachment to the seed surface (PubMed:26482889, PubMed:26834178). Together with MUCI70, required for xylan and pectin synthesis in seed coat epidermal (SCE) cells (PubMed:26482889, PubMed:26834178, PubMed:30228108).</text>
</comment>
<comment type="catalytic activity">
    <reaction evidence="7">
        <text>[(1-&gt;4)-beta-D-xylan](n) + UDP-alpha-D-xylose = [(1-&gt;4)-beta-D-xylan](n+1) + UDP + H(+)</text>
        <dbReference type="Rhea" id="RHEA:15289"/>
        <dbReference type="Rhea" id="RHEA-COMP:9548"/>
        <dbReference type="Rhea" id="RHEA-COMP:9549"/>
        <dbReference type="ChEBI" id="CHEBI:15378"/>
        <dbReference type="ChEBI" id="CHEBI:15447"/>
        <dbReference type="ChEBI" id="CHEBI:57632"/>
        <dbReference type="ChEBI" id="CHEBI:58223"/>
        <dbReference type="EC" id="2.4.2.24"/>
    </reaction>
    <physiologicalReaction direction="left-to-right" evidence="7">
        <dbReference type="Rhea" id="RHEA:15290"/>
    </physiologicalReaction>
</comment>
<comment type="subcellular location">
    <subcellularLocation>
        <location evidence="14">Golgi apparatus membrane</location>
        <topology evidence="14">Single-pass type II membrane protein</topology>
    </subcellularLocation>
</comment>
<comment type="tissue specificity">
    <text evidence="4">Expressed in developing interfascicular fibers and xylem cells in stems and developing secondary xylem in roots.</text>
</comment>
<comment type="developmental stage">
    <text evidence="9">Expressed in the seed coat at the linear cotyledon and mature green stages, when mucilage synthesis occurs.</text>
</comment>
<comment type="disruption phenotype">
    <text evidence="3 9 10 11">Reduced xylan content in cell wall (PubMed:17944810). Reduced amount and altered composition of seed coat mucilage (PubMed:26482889, PubMed:26834178). Plants missing both MUCI70 and IRX14 exhibit a severe reduction in both xylan- and pectin-related sugars in total seed mucilage extracts (PubMed:30228108).</text>
</comment>
<comment type="similarity">
    <text evidence="13">Belongs to the glycosyltransferase 43 family.</text>
</comment>
<comment type="sequence caution" evidence="13">
    <conflict type="erroneous gene model prediction">
        <sequence resource="EMBL-CDS" id="CAB16800"/>
    </conflict>
</comment>
<comment type="sequence caution" evidence="13">
    <conflict type="erroneous gene model prediction">
        <sequence resource="EMBL-CDS" id="CAB80355"/>
    </conflict>
</comment>
<organism>
    <name type="scientific">Arabidopsis thaliana</name>
    <name type="common">Mouse-ear cress</name>
    <dbReference type="NCBI Taxonomy" id="3702"/>
    <lineage>
        <taxon>Eukaryota</taxon>
        <taxon>Viridiplantae</taxon>
        <taxon>Streptophyta</taxon>
        <taxon>Embryophyta</taxon>
        <taxon>Tracheophyta</taxon>
        <taxon>Spermatophyta</taxon>
        <taxon>Magnoliopsida</taxon>
        <taxon>eudicotyledons</taxon>
        <taxon>Gunneridae</taxon>
        <taxon>Pentapetalae</taxon>
        <taxon>rosids</taxon>
        <taxon>malvids</taxon>
        <taxon>Brassicales</taxon>
        <taxon>Brassicaceae</taxon>
        <taxon>Camelineae</taxon>
        <taxon>Arabidopsis</taxon>
    </lineage>
</organism>
<feature type="chain" id="PRO_0000407565" description="Beta-1,4-xylosyltransferase IRX14">
    <location>
        <begin position="1"/>
        <end position="525"/>
    </location>
</feature>
<feature type="topological domain" description="Cytoplasmic" evidence="1">
    <location>
        <begin position="1"/>
        <end position="35"/>
    </location>
</feature>
<feature type="transmembrane region" description="Helical; Signal-anchor for type II membrane protein" evidence="1">
    <location>
        <begin position="36"/>
        <end position="56"/>
    </location>
</feature>
<feature type="topological domain" description="Lumenal" evidence="1">
    <location>
        <begin position="57"/>
        <end position="525"/>
    </location>
</feature>
<feature type="region of interest" description="Disordered" evidence="2">
    <location>
        <begin position="452"/>
        <end position="525"/>
    </location>
</feature>
<feature type="compositionally biased region" description="Polar residues" evidence="2">
    <location>
        <begin position="471"/>
        <end position="488"/>
    </location>
</feature>
<feature type="compositionally biased region" description="Basic residues" evidence="2">
    <location>
        <begin position="489"/>
        <end position="503"/>
    </location>
</feature>
<feature type="compositionally biased region" description="Polar residues" evidence="2">
    <location>
        <begin position="508"/>
        <end position="519"/>
    </location>
</feature>
<feature type="glycosylation site" description="N-linked (GlcNAc...) asparagine" evidence="1">
    <location>
        <position position="102"/>
    </location>
</feature>
<feature type="glycosylation site" description="N-linked (GlcNAc...) asparagine" evidence="1">
    <location>
        <position position="204"/>
    </location>
</feature>
<feature type="glycosylation site" description="N-linked (GlcNAc...) asparagine" evidence="1">
    <location>
        <position position="326"/>
    </location>
</feature>
<feature type="mutagenesis site" description="Unable to complement irregular xylem phenotype of irx14 mutant." evidence="8">
    <original>DD</original>
    <variation>AA</variation>
    <location>
        <begin position="261"/>
        <end position="262"/>
    </location>
</feature>
<feature type="mutagenesis site" description="Complements irregular xylem phenotype of irx14 mutant." evidence="8">
    <original>Q</original>
    <variation>A</variation>
    <location>
        <position position="321"/>
    </location>
</feature>
<feature type="mutagenesis site" description="Complements irregular xylem phenotype of irx14 mutant." evidence="8">
    <original>C</original>
    <variation>A</variation>
    <location>
        <position position="415"/>
    </location>
</feature>